<dbReference type="EC" id="4.6.1.17" evidence="1"/>
<dbReference type="EMBL" id="AL123456">
    <property type="protein sequence ID" value="CCP45921.1"/>
    <property type="molecule type" value="Genomic_DNA"/>
</dbReference>
<dbReference type="PIR" id="F70920">
    <property type="entry name" value="F70920"/>
</dbReference>
<dbReference type="RefSeq" id="WP_003899917.1">
    <property type="nucleotide sequence ID" value="NZ_NVQJ01000011.1"/>
</dbReference>
<dbReference type="RefSeq" id="YP_177927.1">
    <property type="nucleotide sequence ID" value="NC_000962.3"/>
</dbReference>
<dbReference type="SMR" id="P9WJR9"/>
<dbReference type="FunCoup" id="P9WJR9">
    <property type="interactions" value="177"/>
</dbReference>
<dbReference type="STRING" id="83332.Rv3111"/>
<dbReference type="PaxDb" id="83332-Rv3111"/>
<dbReference type="DNASU" id="888680"/>
<dbReference type="GeneID" id="888680"/>
<dbReference type="KEGG" id="mtu:Rv3111"/>
<dbReference type="KEGG" id="mtv:RVBD_3111"/>
<dbReference type="TubercuList" id="Rv3111"/>
<dbReference type="eggNOG" id="COG0315">
    <property type="taxonomic scope" value="Bacteria"/>
</dbReference>
<dbReference type="InParanoid" id="P9WJR9"/>
<dbReference type="OrthoDB" id="9794429at2"/>
<dbReference type="PhylomeDB" id="P9WJR9"/>
<dbReference type="UniPathway" id="UPA00344"/>
<dbReference type="PHI-base" id="PHI:7748"/>
<dbReference type="Proteomes" id="UP000001584">
    <property type="component" value="Chromosome"/>
</dbReference>
<dbReference type="GO" id="GO:0005576">
    <property type="term" value="C:extracellular region"/>
    <property type="evidence" value="ECO:0007005"/>
    <property type="project" value="MTBBASE"/>
</dbReference>
<dbReference type="GO" id="GO:0061799">
    <property type="term" value="F:cyclic pyranopterin monophosphate synthase activity"/>
    <property type="evidence" value="ECO:0007669"/>
    <property type="project" value="UniProtKB-UniRule"/>
</dbReference>
<dbReference type="GO" id="GO:0006777">
    <property type="term" value="P:Mo-molybdopterin cofactor biosynthetic process"/>
    <property type="evidence" value="ECO:0007669"/>
    <property type="project" value="UniProtKB-UniRule"/>
</dbReference>
<dbReference type="GO" id="GO:0052170">
    <property type="term" value="P:symbiont-mediated suppression of host innate immune response"/>
    <property type="evidence" value="ECO:0000314"/>
    <property type="project" value="MTBBASE"/>
</dbReference>
<dbReference type="CDD" id="cd01420">
    <property type="entry name" value="MoaC_PE"/>
    <property type="match status" value="1"/>
</dbReference>
<dbReference type="FunFam" id="3.30.70.640:FF:000001">
    <property type="entry name" value="Cyclic pyranopterin monophosphate synthase"/>
    <property type="match status" value="1"/>
</dbReference>
<dbReference type="Gene3D" id="3.30.70.640">
    <property type="entry name" value="Molybdopterin cofactor biosynthesis C (MoaC) domain"/>
    <property type="match status" value="1"/>
</dbReference>
<dbReference type="HAMAP" id="MF_01224_B">
    <property type="entry name" value="MoaC_B"/>
    <property type="match status" value="1"/>
</dbReference>
<dbReference type="InterPro" id="IPR023045">
    <property type="entry name" value="MoaC"/>
</dbReference>
<dbReference type="InterPro" id="IPR047594">
    <property type="entry name" value="MoaC_bact/euk"/>
</dbReference>
<dbReference type="InterPro" id="IPR036522">
    <property type="entry name" value="MoaC_sf"/>
</dbReference>
<dbReference type="InterPro" id="IPR050105">
    <property type="entry name" value="MoCo_biosynth_MoaA/MoaC"/>
</dbReference>
<dbReference type="InterPro" id="IPR002820">
    <property type="entry name" value="Mopterin_CF_biosynth-C_dom"/>
</dbReference>
<dbReference type="NCBIfam" id="TIGR00581">
    <property type="entry name" value="moaC"/>
    <property type="match status" value="1"/>
</dbReference>
<dbReference type="NCBIfam" id="NF006870">
    <property type="entry name" value="PRK09364.1"/>
    <property type="match status" value="1"/>
</dbReference>
<dbReference type="PANTHER" id="PTHR22960:SF29">
    <property type="entry name" value="CYCLIC PYRANOPTERIN MONOPHOSPHATE SYNTHASE"/>
    <property type="match status" value="1"/>
</dbReference>
<dbReference type="PANTHER" id="PTHR22960">
    <property type="entry name" value="MOLYBDOPTERIN COFACTOR SYNTHESIS PROTEIN A"/>
    <property type="match status" value="1"/>
</dbReference>
<dbReference type="Pfam" id="PF01967">
    <property type="entry name" value="MoaC"/>
    <property type="match status" value="1"/>
</dbReference>
<dbReference type="SUPFAM" id="SSF55040">
    <property type="entry name" value="Molybdenum cofactor biosynthesis protein C, MoaC"/>
    <property type="match status" value="1"/>
</dbReference>
<gene>
    <name type="primary">moaC1</name>
    <name type="synonym">moaC</name>
    <name type="ordered locus">Rv3111</name>
    <name type="ORF">MTCY164.21</name>
</gene>
<name>MOAC1_MYCTU</name>
<reference key="1">
    <citation type="journal article" date="1998" name="Nature">
        <title>Deciphering the biology of Mycobacterium tuberculosis from the complete genome sequence.</title>
        <authorList>
            <person name="Cole S.T."/>
            <person name="Brosch R."/>
            <person name="Parkhill J."/>
            <person name="Garnier T."/>
            <person name="Churcher C.M."/>
            <person name="Harris D.E."/>
            <person name="Gordon S.V."/>
            <person name="Eiglmeier K."/>
            <person name="Gas S."/>
            <person name="Barry C.E. III"/>
            <person name="Tekaia F."/>
            <person name="Badcock K."/>
            <person name="Basham D."/>
            <person name="Brown D."/>
            <person name="Chillingworth T."/>
            <person name="Connor R."/>
            <person name="Davies R.M."/>
            <person name="Devlin K."/>
            <person name="Feltwell T."/>
            <person name="Gentles S."/>
            <person name="Hamlin N."/>
            <person name="Holroyd S."/>
            <person name="Hornsby T."/>
            <person name="Jagels K."/>
            <person name="Krogh A."/>
            <person name="McLean J."/>
            <person name="Moule S."/>
            <person name="Murphy L.D."/>
            <person name="Oliver S."/>
            <person name="Osborne J."/>
            <person name="Quail M.A."/>
            <person name="Rajandream M.A."/>
            <person name="Rogers J."/>
            <person name="Rutter S."/>
            <person name="Seeger K."/>
            <person name="Skelton S."/>
            <person name="Squares S."/>
            <person name="Squares R."/>
            <person name="Sulston J.E."/>
            <person name="Taylor K."/>
            <person name="Whitehead S."/>
            <person name="Barrell B.G."/>
        </authorList>
    </citation>
    <scope>NUCLEOTIDE SEQUENCE [LARGE SCALE GENOMIC DNA]</scope>
    <source>
        <strain>ATCC 25618 / H37Rv</strain>
    </source>
</reference>
<reference key="2">
    <citation type="journal article" date="2010" name="Microbiology">
        <title>Characterization of the transcriptional regulator Rv3124 of Mycobacterium tuberculosis identifies it as a positive regulator of molybdopterin biosynthesis and defines the functional consequences of a non-synonymous SNP in the Mycobacterium bovis BCG orthologue.</title>
        <authorList>
            <person name="Mendoza Lopez P."/>
            <person name="Golby P."/>
            <person name="Wooff E."/>
            <person name="Nunez Garcia J."/>
            <person name="Garcia Pelayo M.C."/>
            <person name="Conlon K."/>
            <person name="Gema Camacho A."/>
            <person name="Hewinson R.G."/>
            <person name="Polaina J."/>
            <person name="Suarez Garcia A."/>
            <person name="Gordon S.V."/>
        </authorList>
    </citation>
    <scope>INDUCTION</scope>
    <source>
        <strain>ATCC 25618 / H37Rv</strain>
    </source>
</reference>
<reference key="3">
    <citation type="journal article" date="2010" name="PLoS Pathog.">
        <title>High content phenotypic cell-based visual screen identifies Mycobacterium tuberculosis acyltrehalose-containing glycolipids involved in phagosome remodeling.</title>
        <authorList>
            <person name="Brodin P."/>
            <person name="Poquet Y."/>
            <person name="Levillain F."/>
            <person name="Peguillet I."/>
            <person name="Larrouy-Maumus G."/>
            <person name="Gilleron M."/>
            <person name="Ewann F."/>
            <person name="Christophe T."/>
            <person name="Fenistein D."/>
            <person name="Jang J."/>
            <person name="Jang M.S."/>
            <person name="Park S.J."/>
            <person name="Rauzier J."/>
            <person name="Carralot J.P."/>
            <person name="Shrimpton R."/>
            <person name="Genovesio A."/>
            <person name="Gonzalo-Asensio J.A."/>
            <person name="Puzo G."/>
            <person name="Martin C."/>
            <person name="Brosch R."/>
            <person name="Stewart G.R."/>
            <person name="Gicquel B."/>
            <person name="Neyrolles O."/>
        </authorList>
    </citation>
    <scope>FUNCTION</scope>
    <scope>DISRUPTION PHENOTYPE</scope>
    <source>
        <strain>Beijing GC1237</strain>
    </source>
</reference>
<feature type="chain" id="PRO_0000097810" description="Cyclic pyranopterin monophosphate synthase 1">
    <location>
        <begin position="1"/>
        <end position="170"/>
    </location>
</feature>
<feature type="active site" evidence="1">
    <location>
        <position position="131"/>
    </location>
</feature>
<feature type="binding site" evidence="1">
    <location>
        <begin position="79"/>
        <end position="81"/>
    </location>
    <ligand>
        <name>substrate</name>
    </ligand>
</feature>
<feature type="binding site" evidence="1">
    <location>
        <begin position="116"/>
        <end position="117"/>
    </location>
    <ligand>
        <name>substrate</name>
    </ligand>
</feature>
<evidence type="ECO:0000255" key="1">
    <source>
        <dbReference type="HAMAP-Rule" id="MF_01224"/>
    </source>
</evidence>
<evidence type="ECO:0000269" key="2">
    <source>
    </source>
</evidence>
<evidence type="ECO:0000269" key="3">
    <source>
    </source>
</evidence>
<evidence type="ECO:0000305" key="4">
    <source>
    </source>
</evidence>
<comment type="function">
    <text evidence="1 4">Catalyzes the conversion of (8S)-3',8-cyclo-7,8-dihydroguanosine 5'-triphosphate to cyclic pyranopterin monophosphate (cPMP) (By similarity). Probably plays a role in host phagosome maturation arrest (PubMed:20844580).</text>
</comment>
<comment type="catalytic activity">
    <reaction evidence="1">
        <text>(8S)-3',8-cyclo-7,8-dihydroguanosine 5'-triphosphate = cyclic pyranopterin phosphate + diphosphate</text>
        <dbReference type="Rhea" id="RHEA:49580"/>
        <dbReference type="ChEBI" id="CHEBI:33019"/>
        <dbReference type="ChEBI" id="CHEBI:59648"/>
        <dbReference type="ChEBI" id="CHEBI:131766"/>
        <dbReference type="EC" id="4.6.1.17"/>
    </reaction>
</comment>
<comment type="pathway">
    <text evidence="1">Cofactor biosynthesis; molybdopterin biosynthesis.</text>
</comment>
<comment type="subunit">
    <text evidence="1">Homohexamer; trimer of dimers.</text>
</comment>
<comment type="induction">
    <text evidence="2">Expression is positively regulated by the transcriptional regulator MoaR1.</text>
</comment>
<comment type="disruption phenotype">
    <text evidence="3">Grows normally in liquid culture, traffics into host (human and mouse) acidified compartments early after phagocytosis, suggesting it no longer arrests phagosome maturation as well as wild-type, impaired growth in mouse macrophages (PubMed:20844580).</text>
</comment>
<comment type="similarity">
    <text evidence="1">Belongs to the MoaC family.</text>
</comment>
<accession>P9WJR9</accession>
<accession>L0TBK8</accession>
<accession>O05788</accession>
<accession>P0A5K4</accession>
<sequence length="170" mass="17845">MIDHALALTHIDERGAARMVDVSEKPVTLRVAKASGLVIMKPSTLRMISDGAAAKGDVMAAARIAGIAAAKRTGDLIPLCHPLGLDAVSVTITPCEPDRVKILATTTTLGRTGVEMEALTAVSVAALTIYDMCKAVDRAMEISQIVLQEKSGGRSGVYRRSASDLACQSR</sequence>
<protein>
    <recommendedName>
        <fullName evidence="1">Cyclic pyranopterin monophosphate synthase 1</fullName>
        <ecNumber evidence="1">4.6.1.17</ecNumber>
    </recommendedName>
    <alternativeName>
        <fullName evidence="1">Molybdenum cofactor biosynthesis protein C 1</fullName>
    </alternativeName>
</protein>
<organism>
    <name type="scientific">Mycobacterium tuberculosis (strain ATCC 25618 / H37Rv)</name>
    <dbReference type="NCBI Taxonomy" id="83332"/>
    <lineage>
        <taxon>Bacteria</taxon>
        <taxon>Bacillati</taxon>
        <taxon>Actinomycetota</taxon>
        <taxon>Actinomycetes</taxon>
        <taxon>Mycobacteriales</taxon>
        <taxon>Mycobacteriaceae</taxon>
        <taxon>Mycobacterium</taxon>
        <taxon>Mycobacterium tuberculosis complex</taxon>
    </lineage>
</organism>
<proteinExistence type="evidence at transcript level"/>
<keyword id="KW-0456">Lyase</keyword>
<keyword id="KW-0501">Molybdenum cofactor biosynthesis</keyword>
<keyword id="KW-1185">Reference proteome</keyword>